<protein>
    <recommendedName>
        <fullName evidence="5">Large ribosomal subunit protein P1</fullName>
    </recommendedName>
    <alternativeName>
        <fullName>60S acidic ribosomal protein P1</fullName>
    </alternativeName>
    <alternativeName>
        <fullName>eL12'/ eL12'-P</fullName>
    </alternativeName>
</protein>
<name>RLA1_ARTSA</name>
<feature type="initiator methionine" description="Removed" evidence="4">
    <location>
        <position position="1"/>
    </location>
</feature>
<feature type="chain" id="PRO_0000157689" description="Large ribosomal subunit protein P1">
    <location>
        <begin position="2"/>
        <end position="110"/>
    </location>
</feature>
<feature type="region of interest" description="Disordered" evidence="1">
    <location>
        <begin position="69"/>
        <end position="110"/>
    </location>
</feature>
<feature type="compositionally biased region" description="Low complexity" evidence="1">
    <location>
        <begin position="69"/>
        <end position="83"/>
    </location>
</feature>
<feature type="compositionally biased region" description="Basic and acidic residues" evidence="1">
    <location>
        <begin position="84"/>
        <end position="96"/>
    </location>
</feature>
<feature type="modified residue" description="Blocked amino end (Ala)" evidence="4">
    <location>
        <position position="2"/>
    </location>
</feature>
<feature type="modified residue" description="Phosphoserine; in form eL12'-P" evidence="3">
    <location>
        <position position="97"/>
    </location>
</feature>
<feature type="sequence conflict" description="In Ref. 1; AA sequence." evidence="5" ref="1">
    <location>
        <position position="9"/>
    </location>
</feature>
<feature type="sequence conflict" description="In Ref. 1; AA sequence." evidence="5" ref="1">
    <original>D</original>
    <variation>V</variation>
    <location>
        <position position="22"/>
    </location>
</feature>
<feature type="sequence conflict" description="In Ref. 1; AA sequence." evidence="5" ref="1">
    <original>W</original>
    <variation>S</variation>
    <location>
        <position position="43"/>
    </location>
</feature>
<proteinExistence type="evidence at protein level"/>
<sequence length="110" mass="11538">MASKDELACVYAALILLDDDVDITTEKVNTILRAAGVSVEPYWPGLFTKALEGLDLKSMITNVGSGVGAAPAAGGAAAATEAPAAKEEKKEEKKEESEEEDEDMGFGLFD</sequence>
<organism>
    <name type="scientific">Artemia salina</name>
    <name type="common">Brine shrimp</name>
    <dbReference type="NCBI Taxonomy" id="85549"/>
    <lineage>
        <taxon>Eukaryota</taxon>
        <taxon>Metazoa</taxon>
        <taxon>Ecdysozoa</taxon>
        <taxon>Arthropoda</taxon>
        <taxon>Crustacea</taxon>
        <taxon>Branchiopoda</taxon>
        <taxon>Anostraca</taxon>
        <taxon>Artemiidae</taxon>
        <taxon>Artemia</taxon>
    </lineage>
</organism>
<dbReference type="EMBL" id="X02633">
    <property type="protein sequence ID" value="CAA26480.1"/>
    <property type="molecule type" value="mRNA"/>
</dbReference>
<dbReference type="PIR" id="B25208">
    <property type="entry name" value="R6SSP2"/>
</dbReference>
<dbReference type="SMR" id="P02402"/>
<dbReference type="iPTMnet" id="P02402"/>
<dbReference type="GO" id="GO:0022625">
    <property type="term" value="C:cytosolic large ribosomal subunit"/>
    <property type="evidence" value="ECO:0007669"/>
    <property type="project" value="TreeGrafter"/>
</dbReference>
<dbReference type="GO" id="GO:0030295">
    <property type="term" value="F:protein kinase activator activity"/>
    <property type="evidence" value="ECO:0007669"/>
    <property type="project" value="TreeGrafter"/>
</dbReference>
<dbReference type="GO" id="GO:0043021">
    <property type="term" value="F:ribonucleoprotein complex binding"/>
    <property type="evidence" value="ECO:0007669"/>
    <property type="project" value="TreeGrafter"/>
</dbReference>
<dbReference type="GO" id="GO:0003735">
    <property type="term" value="F:structural constituent of ribosome"/>
    <property type="evidence" value="ECO:0007669"/>
    <property type="project" value="InterPro"/>
</dbReference>
<dbReference type="GO" id="GO:0002181">
    <property type="term" value="P:cytoplasmic translation"/>
    <property type="evidence" value="ECO:0007669"/>
    <property type="project" value="TreeGrafter"/>
</dbReference>
<dbReference type="GO" id="GO:0006414">
    <property type="term" value="P:translational elongation"/>
    <property type="evidence" value="ECO:0007669"/>
    <property type="project" value="InterPro"/>
</dbReference>
<dbReference type="CDD" id="cd05831">
    <property type="entry name" value="Ribosomal_P1"/>
    <property type="match status" value="1"/>
</dbReference>
<dbReference type="FunFam" id="1.10.10.1410:FF:000001">
    <property type="entry name" value="60S acidic ribosomal protein P1"/>
    <property type="match status" value="1"/>
</dbReference>
<dbReference type="Gene3D" id="1.10.10.1410">
    <property type="match status" value="1"/>
</dbReference>
<dbReference type="HAMAP" id="MF_01478">
    <property type="entry name" value="Ribosomal_L12_arch"/>
    <property type="match status" value="1"/>
</dbReference>
<dbReference type="InterPro" id="IPR038716">
    <property type="entry name" value="P1/P2_N_sf"/>
</dbReference>
<dbReference type="InterPro" id="IPR027534">
    <property type="entry name" value="Ribosomal_P1/P2"/>
</dbReference>
<dbReference type="InterPro" id="IPR001859">
    <property type="entry name" value="Ribosomal_P1/P2_euk"/>
</dbReference>
<dbReference type="PANTHER" id="PTHR45696">
    <property type="entry name" value="60S ACIDIC RIBOSOMAL PROTEIN P1"/>
    <property type="match status" value="1"/>
</dbReference>
<dbReference type="PANTHER" id="PTHR45696:SF10">
    <property type="entry name" value="LARGE RIBOSOMAL SUBUNIT PROTEIN P1"/>
    <property type="match status" value="1"/>
</dbReference>
<dbReference type="Pfam" id="PF00428">
    <property type="entry name" value="Ribosomal_60s"/>
    <property type="match status" value="1"/>
</dbReference>
<dbReference type="PRINTS" id="PR00456">
    <property type="entry name" value="RIBOSOMALP2"/>
</dbReference>
<accession>P02402</accession>
<comment type="function">
    <text>Plays an important role in the elongation step of protein synthesis.</text>
</comment>
<comment type="subunit">
    <text evidence="2">Part of the ribosomal stalk of the large ribosomal subunit; P1 and P2 exist as dimers which assemble on the P0 scaffold.</text>
</comment>
<comment type="PTM">
    <text>Phosphorylation of Ser-97 converts eL12' to eL12'-P.</text>
</comment>
<comment type="mass spectrometry" mass="80479.25" error="9.3" method="Electrospray" evidence="2">
    <text>Isolated P0(P1/P2)4.</text>
</comment>
<comment type="mass spectrometry" mass="11440.38" error="1.39" method="Electrospray" evidence="2"/>
<comment type="similarity">
    <text evidence="5">Belongs to the eukaryotic ribosomal protein P1/P2 family.</text>
</comment>
<reference key="1">
    <citation type="journal article" date="1982" name="FEBS Lett.">
        <title>The primary structure of protein eL12'/eL12'-P from the large subunit of Artemia salina ribosomes.</title>
        <authorList>
            <person name="Amons R."/>
            <person name="Pluijms W.J.M."/>
            <person name="Kriek J."/>
            <person name="Moeller W."/>
        </authorList>
    </citation>
    <scope>PROTEIN SEQUENCE OF 2-110</scope>
</reference>
<reference key="2">
    <citation type="journal article" date="1985" name="Eur. J. Biochem.">
        <title>Molecular cloning and analysis of cDNA sequences for two ribosomal proteins from Artemia. The coordinate expression of genes for ribosomal proteins and elongation factor 1 during embryogenesis of Artemia.</title>
        <authorList>
            <person name="Maassen J.A."/>
            <person name="Schop E.N."/>
            <person name="Brands J.H.G.M."/>
            <person name="van Hemert F.J."/>
            <person name="Lenstra J.A."/>
            <person name="Moeller W."/>
        </authorList>
    </citation>
    <scope>NUCLEOTIDE SEQUENCE [MRNA] OF 1-107</scope>
    <scope>PHOSPHORYLATION AT SER-97</scope>
</reference>
<reference key="3">
    <citation type="journal article" date="2010" name="Mol. Cell. Proteomics">
        <title>Mass spectrometry defines the stoichiometry of ribosomal stalk complexes across the phylogenetic tree.</title>
        <authorList>
            <person name="Gordiyenko Y."/>
            <person name="Videler H."/>
            <person name="Zhou M."/>
            <person name="McKay A.R."/>
            <person name="Fucini P."/>
            <person name="Biegel E."/>
            <person name="Muller V."/>
            <person name="Robinson C.V."/>
        </authorList>
    </citation>
    <scope>SUBUNIT</scope>
    <scope>STOICHIOMETRY</scope>
    <scope>MASS SPECTROMETRY</scope>
</reference>
<evidence type="ECO:0000256" key="1">
    <source>
        <dbReference type="SAM" id="MobiDB-lite"/>
    </source>
</evidence>
<evidence type="ECO:0000269" key="2">
    <source>
    </source>
</evidence>
<evidence type="ECO:0000269" key="3">
    <source>
    </source>
</evidence>
<evidence type="ECO:0000269" key="4">
    <source ref="1"/>
</evidence>
<evidence type="ECO:0000305" key="5"/>
<keyword id="KW-0903">Direct protein sequencing</keyword>
<keyword id="KW-0597">Phosphoprotein</keyword>
<keyword id="KW-0687">Ribonucleoprotein</keyword>
<keyword id="KW-0689">Ribosomal protein</keyword>